<protein>
    <recommendedName>
        <fullName evidence="1">Thymidylate kinase</fullName>
        <ecNumber evidence="1">2.7.4.9</ecNumber>
    </recommendedName>
    <alternativeName>
        <fullName evidence="1">dTMP kinase</fullName>
    </alternativeName>
</protein>
<accession>B2S5K6</accession>
<dbReference type="EC" id="2.7.4.9" evidence="1"/>
<dbReference type="EMBL" id="CP000887">
    <property type="protein sequence ID" value="ACD72453.1"/>
    <property type="molecule type" value="Genomic_DNA"/>
</dbReference>
<dbReference type="RefSeq" id="WP_002964110.1">
    <property type="nucleotide sequence ID" value="NC_010742.1"/>
</dbReference>
<dbReference type="SMR" id="B2S5K6"/>
<dbReference type="GeneID" id="97533737"/>
<dbReference type="KEGG" id="bmc:BAbS19_I09380"/>
<dbReference type="HOGENOM" id="CLU_049131_0_0_5"/>
<dbReference type="Proteomes" id="UP000002565">
    <property type="component" value="Chromosome 1"/>
</dbReference>
<dbReference type="GO" id="GO:0005829">
    <property type="term" value="C:cytosol"/>
    <property type="evidence" value="ECO:0007669"/>
    <property type="project" value="TreeGrafter"/>
</dbReference>
<dbReference type="GO" id="GO:0005524">
    <property type="term" value="F:ATP binding"/>
    <property type="evidence" value="ECO:0007669"/>
    <property type="project" value="UniProtKB-UniRule"/>
</dbReference>
<dbReference type="GO" id="GO:0004798">
    <property type="term" value="F:dTMP kinase activity"/>
    <property type="evidence" value="ECO:0007669"/>
    <property type="project" value="UniProtKB-UniRule"/>
</dbReference>
<dbReference type="GO" id="GO:0006233">
    <property type="term" value="P:dTDP biosynthetic process"/>
    <property type="evidence" value="ECO:0007669"/>
    <property type="project" value="InterPro"/>
</dbReference>
<dbReference type="GO" id="GO:0006235">
    <property type="term" value="P:dTTP biosynthetic process"/>
    <property type="evidence" value="ECO:0007669"/>
    <property type="project" value="UniProtKB-UniRule"/>
</dbReference>
<dbReference type="GO" id="GO:0006227">
    <property type="term" value="P:dUDP biosynthetic process"/>
    <property type="evidence" value="ECO:0007669"/>
    <property type="project" value="TreeGrafter"/>
</dbReference>
<dbReference type="CDD" id="cd01672">
    <property type="entry name" value="TMPK"/>
    <property type="match status" value="1"/>
</dbReference>
<dbReference type="FunFam" id="3.40.50.300:FF:000225">
    <property type="entry name" value="Thymidylate kinase"/>
    <property type="match status" value="1"/>
</dbReference>
<dbReference type="Gene3D" id="3.40.50.300">
    <property type="entry name" value="P-loop containing nucleotide triphosphate hydrolases"/>
    <property type="match status" value="1"/>
</dbReference>
<dbReference type="HAMAP" id="MF_00165">
    <property type="entry name" value="Thymidylate_kinase"/>
    <property type="match status" value="1"/>
</dbReference>
<dbReference type="InterPro" id="IPR027417">
    <property type="entry name" value="P-loop_NTPase"/>
</dbReference>
<dbReference type="InterPro" id="IPR039430">
    <property type="entry name" value="Thymidylate_kin-like_dom"/>
</dbReference>
<dbReference type="InterPro" id="IPR018095">
    <property type="entry name" value="Thymidylate_kin_CS"/>
</dbReference>
<dbReference type="InterPro" id="IPR018094">
    <property type="entry name" value="Thymidylate_kinase"/>
</dbReference>
<dbReference type="NCBIfam" id="TIGR00041">
    <property type="entry name" value="DTMP_kinase"/>
    <property type="match status" value="1"/>
</dbReference>
<dbReference type="PANTHER" id="PTHR10344">
    <property type="entry name" value="THYMIDYLATE KINASE"/>
    <property type="match status" value="1"/>
</dbReference>
<dbReference type="PANTHER" id="PTHR10344:SF4">
    <property type="entry name" value="UMP-CMP KINASE 2, MITOCHONDRIAL"/>
    <property type="match status" value="1"/>
</dbReference>
<dbReference type="Pfam" id="PF02223">
    <property type="entry name" value="Thymidylate_kin"/>
    <property type="match status" value="1"/>
</dbReference>
<dbReference type="SUPFAM" id="SSF52540">
    <property type="entry name" value="P-loop containing nucleoside triphosphate hydrolases"/>
    <property type="match status" value="1"/>
</dbReference>
<dbReference type="PROSITE" id="PS01331">
    <property type="entry name" value="THYMIDYLATE_KINASE"/>
    <property type="match status" value="1"/>
</dbReference>
<reference key="1">
    <citation type="journal article" date="2008" name="PLoS ONE">
        <title>Genome sequence of Brucella abortus vaccine strain S19 compared to virulent strains yields candidate virulence genes.</title>
        <authorList>
            <person name="Crasta O.R."/>
            <person name="Folkerts O."/>
            <person name="Fei Z."/>
            <person name="Mane S.P."/>
            <person name="Evans C."/>
            <person name="Martino-Catt S."/>
            <person name="Bricker B."/>
            <person name="Yu G."/>
            <person name="Du L."/>
            <person name="Sobral B.W."/>
        </authorList>
    </citation>
    <scope>NUCLEOTIDE SEQUENCE [LARGE SCALE GENOMIC DNA]</scope>
    <source>
        <strain>S19</strain>
    </source>
</reference>
<comment type="function">
    <text evidence="1">Phosphorylation of dTMP to form dTDP in both de novo and salvage pathways of dTTP synthesis.</text>
</comment>
<comment type="catalytic activity">
    <reaction evidence="1">
        <text>dTMP + ATP = dTDP + ADP</text>
        <dbReference type="Rhea" id="RHEA:13517"/>
        <dbReference type="ChEBI" id="CHEBI:30616"/>
        <dbReference type="ChEBI" id="CHEBI:58369"/>
        <dbReference type="ChEBI" id="CHEBI:63528"/>
        <dbReference type="ChEBI" id="CHEBI:456216"/>
        <dbReference type="EC" id="2.7.4.9"/>
    </reaction>
</comment>
<comment type="similarity">
    <text evidence="1">Belongs to the thymidylate kinase family.</text>
</comment>
<feature type="chain" id="PRO_1000097378" description="Thymidylate kinase">
    <location>
        <begin position="1"/>
        <end position="214"/>
    </location>
</feature>
<feature type="binding site" evidence="1">
    <location>
        <begin position="10"/>
        <end position="17"/>
    </location>
    <ligand>
        <name>ATP</name>
        <dbReference type="ChEBI" id="CHEBI:30616"/>
    </ligand>
</feature>
<name>KTHY_BRUA1</name>
<proteinExistence type="inferred from homology"/>
<evidence type="ECO:0000255" key="1">
    <source>
        <dbReference type="HAMAP-Rule" id="MF_00165"/>
    </source>
</evidence>
<sequence length="214" mass="23171">MSGLFITFEGGEGAGKSTQIALLASHLRNHGFDPVITREPGGSPGAEAIRHVILSGNAETYGPAMEALLFAAARADHVDQLIRPTLAEGRIVLCDRFIDSSRAYQGVTGNLDATYMAAIERIAIDGAMPDLTLVLDICAERGLSRAGKRRGSDTADRFEKEDIAVHEARRQAFLEIARQEPARCKVIDADRSQEKIADEIRSVVDTILTEKGLL</sequence>
<gene>
    <name evidence="1" type="primary">tmk</name>
    <name type="ordered locus">BAbS19_I09380</name>
</gene>
<keyword id="KW-0067">ATP-binding</keyword>
<keyword id="KW-0418">Kinase</keyword>
<keyword id="KW-0545">Nucleotide biosynthesis</keyword>
<keyword id="KW-0547">Nucleotide-binding</keyword>
<keyword id="KW-0808">Transferase</keyword>
<organism>
    <name type="scientific">Brucella abortus (strain S19)</name>
    <dbReference type="NCBI Taxonomy" id="430066"/>
    <lineage>
        <taxon>Bacteria</taxon>
        <taxon>Pseudomonadati</taxon>
        <taxon>Pseudomonadota</taxon>
        <taxon>Alphaproteobacteria</taxon>
        <taxon>Hyphomicrobiales</taxon>
        <taxon>Brucellaceae</taxon>
        <taxon>Brucella/Ochrobactrum group</taxon>
        <taxon>Brucella</taxon>
    </lineage>
</organism>